<protein>
    <recommendedName>
        <fullName>Mediator of RNA polymerase II transcription subunit 14</fullName>
    </recommendedName>
    <alternativeName>
        <fullName>Mediator complex subunit 14</fullName>
    </alternativeName>
</protein>
<accession>A2QFK0</accession>
<evidence type="ECO:0000250" key="1"/>
<evidence type="ECO:0000256" key="2">
    <source>
        <dbReference type="SAM" id="MobiDB-lite"/>
    </source>
</evidence>
<evidence type="ECO:0000305" key="3"/>
<feature type="chain" id="PRO_0000304594" description="Mediator of RNA polymerase II transcription subunit 14">
    <location>
        <begin position="1"/>
        <end position="1114"/>
    </location>
</feature>
<feature type="region of interest" description="Disordered" evidence="2">
    <location>
        <begin position="1"/>
        <end position="27"/>
    </location>
</feature>
<feature type="region of interest" description="Disordered" evidence="2">
    <location>
        <begin position="40"/>
        <end position="79"/>
    </location>
</feature>
<feature type="region of interest" description="Disordered" evidence="2">
    <location>
        <begin position="120"/>
        <end position="141"/>
    </location>
</feature>
<feature type="compositionally biased region" description="Polar residues" evidence="2">
    <location>
        <begin position="126"/>
        <end position="140"/>
    </location>
</feature>
<keyword id="KW-0010">Activator</keyword>
<keyword id="KW-0539">Nucleus</keyword>
<keyword id="KW-1185">Reference proteome</keyword>
<keyword id="KW-0804">Transcription</keyword>
<keyword id="KW-0805">Transcription regulation</keyword>
<organism>
    <name type="scientific">Aspergillus niger (strain ATCC MYA-4892 / CBS 513.88 / FGSC A1513)</name>
    <dbReference type="NCBI Taxonomy" id="425011"/>
    <lineage>
        <taxon>Eukaryota</taxon>
        <taxon>Fungi</taxon>
        <taxon>Dikarya</taxon>
        <taxon>Ascomycota</taxon>
        <taxon>Pezizomycotina</taxon>
        <taxon>Eurotiomycetes</taxon>
        <taxon>Eurotiomycetidae</taxon>
        <taxon>Eurotiales</taxon>
        <taxon>Aspergillaceae</taxon>
        <taxon>Aspergillus</taxon>
        <taxon>Aspergillus subgen. Circumdati</taxon>
    </lineage>
</organism>
<reference key="1">
    <citation type="journal article" date="2007" name="Nat. Biotechnol.">
        <title>Genome sequencing and analysis of the versatile cell factory Aspergillus niger CBS 513.88.</title>
        <authorList>
            <person name="Pel H.J."/>
            <person name="de Winde J.H."/>
            <person name="Archer D.B."/>
            <person name="Dyer P.S."/>
            <person name="Hofmann G."/>
            <person name="Schaap P.J."/>
            <person name="Turner G."/>
            <person name="de Vries R.P."/>
            <person name="Albang R."/>
            <person name="Albermann K."/>
            <person name="Andersen M.R."/>
            <person name="Bendtsen J.D."/>
            <person name="Benen J.A.E."/>
            <person name="van den Berg M."/>
            <person name="Breestraat S."/>
            <person name="Caddick M.X."/>
            <person name="Contreras R."/>
            <person name="Cornell M."/>
            <person name="Coutinho P.M."/>
            <person name="Danchin E.G.J."/>
            <person name="Debets A.J.M."/>
            <person name="Dekker P."/>
            <person name="van Dijck P.W.M."/>
            <person name="van Dijk A."/>
            <person name="Dijkhuizen L."/>
            <person name="Driessen A.J.M."/>
            <person name="d'Enfert C."/>
            <person name="Geysens S."/>
            <person name="Goosen C."/>
            <person name="Groot G.S.P."/>
            <person name="de Groot P.W.J."/>
            <person name="Guillemette T."/>
            <person name="Henrissat B."/>
            <person name="Herweijer M."/>
            <person name="van den Hombergh J.P.T.W."/>
            <person name="van den Hondel C.A.M.J.J."/>
            <person name="van der Heijden R.T.J.M."/>
            <person name="van der Kaaij R.M."/>
            <person name="Klis F.M."/>
            <person name="Kools H.J."/>
            <person name="Kubicek C.P."/>
            <person name="van Kuyk P.A."/>
            <person name="Lauber J."/>
            <person name="Lu X."/>
            <person name="van der Maarel M.J.E.C."/>
            <person name="Meulenberg R."/>
            <person name="Menke H."/>
            <person name="Mortimer M.A."/>
            <person name="Nielsen J."/>
            <person name="Oliver S.G."/>
            <person name="Olsthoorn M."/>
            <person name="Pal K."/>
            <person name="van Peij N.N.M.E."/>
            <person name="Ram A.F.J."/>
            <person name="Rinas U."/>
            <person name="Roubos J.A."/>
            <person name="Sagt C.M.J."/>
            <person name="Schmoll M."/>
            <person name="Sun J."/>
            <person name="Ussery D."/>
            <person name="Varga J."/>
            <person name="Vervecken W."/>
            <person name="van de Vondervoort P.J.J."/>
            <person name="Wedler H."/>
            <person name="Woesten H.A.B."/>
            <person name="Zeng A.-P."/>
            <person name="van Ooyen A.J.J."/>
            <person name="Visser J."/>
            <person name="Stam H."/>
        </authorList>
    </citation>
    <scope>NUCLEOTIDE SEQUENCE [LARGE SCALE GENOMIC DNA]</scope>
    <source>
        <strain>ATCC MYA-4892 / CBS 513.88 / FGSC A1513</strain>
    </source>
</reference>
<proteinExistence type="inferred from homology"/>
<dbReference type="EMBL" id="AM270040">
    <property type="protein sequence ID" value="CAK48911.1"/>
    <property type="status" value="ALT_INIT"/>
    <property type="molecule type" value="Genomic_DNA"/>
</dbReference>
<dbReference type="RefSeq" id="XP_001400611.2">
    <property type="nucleotide sequence ID" value="XM_001400574.2"/>
</dbReference>
<dbReference type="EnsemblFungi" id="CAK48911">
    <property type="protein sequence ID" value="CAK48911"/>
    <property type="gene ID" value="An02g14820"/>
</dbReference>
<dbReference type="GeneID" id="4980021"/>
<dbReference type="KEGG" id="ang:An02g14820"/>
<dbReference type="Proteomes" id="UP000006706">
    <property type="component" value="Chromosome 4R"/>
</dbReference>
<dbReference type="GO" id="GO:0070847">
    <property type="term" value="C:core mediator complex"/>
    <property type="evidence" value="ECO:0007669"/>
    <property type="project" value="TreeGrafter"/>
</dbReference>
<dbReference type="GO" id="GO:0016592">
    <property type="term" value="C:mediator complex"/>
    <property type="evidence" value="ECO:0007669"/>
    <property type="project" value="InterPro"/>
</dbReference>
<dbReference type="GO" id="GO:0003712">
    <property type="term" value="F:transcription coregulator activity"/>
    <property type="evidence" value="ECO:0007669"/>
    <property type="project" value="InterPro"/>
</dbReference>
<dbReference type="GO" id="GO:0006357">
    <property type="term" value="P:regulation of transcription by RNA polymerase II"/>
    <property type="evidence" value="ECO:0007669"/>
    <property type="project" value="InterPro"/>
</dbReference>
<dbReference type="InterPro" id="IPR055122">
    <property type="entry name" value="Med14_N"/>
</dbReference>
<dbReference type="InterPro" id="IPR013947">
    <property type="entry name" value="Mediator_Med14"/>
</dbReference>
<dbReference type="PANTHER" id="PTHR12809">
    <property type="entry name" value="MEDIATOR COMPLEX SUBUNIT"/>
    <property type="match status" value="1"/>
</dbReference>
<dbReference type="PANTHER" id="PTHR12809:SF2">
    <property type="entry name" value="MEDIATOR OF RNA POLYMERASE II TRANSCRIPTION SUBUNIT 14"/>
    <property type="match status" value="1"/>
</dbReference>
<dbReference type="Pfam" id="PF08638">
    <property type="entry name" value="Med14"/>
    <property type="match status" value="1"/>
</dbReference>
<sequence>MPGVVMDNANIGGLRHGPGNTYPQDGLSHSRGEVAQFNGANAQDGPVHVNGVEKNASQSRSVEAIPSNHASRVTKGPPELPHITQGFFPFAKLVNRSVQQCWNDLSDLITEMAEMQVNSHGIHPSTAPTTGKSPGNQSPGNIRKKLRILEFSHAKRAEFIKLLVLSQWSRQAADVSKLIDIQNFIRTRHQAYTNALQWVGDMKRDLVQAQVANPDLKTALEVLSRGKVASMSDLGYKPPRRLTVRGTLRKLQKINRLIGARLVVQDEIPPPFKSYRVHDGRVTFAVPGEFELDLSIGEENENSQFFFVDIRFLFSPSPPILKGRLLNELEMTINDVLQNSGLTGCFDLLHNLVLTNKINILFKQATELARSSWSDGLRVELLHRTLVVQYWTLKPGTKSWLEIGIKSGHRKSDSESPGLPSLKFRWVRDGGEVPCEDIAFDAKNLSMETVLRSVIALHVSHTLSSAYCKIRQSSLFSTGFLSLRAHLTRTEPGDCQLDVQLTETRHLQVSIEPMSGVSILSAKPTVSDRFDMERNPERSSVEDIVSRVARIRCNAAIEEIESKVKMLGFEPLNPRAWKLDIRRIFPPNFLRFTLFSHQLWGRSWIVAATSSMDGDSWWVVQLRPTLPAKGPPIPHANGYGQPILRSAQVVTDSFFPARYDIDDAYLANLGHSLSGILAIQSNARYLSDLQSIKFHPPPHKLKIEPDLRVPDILVRYDVSTLPSVFRVAMPAKAKKKSLIRDTIRLAFHGVDPREKCAIMVAYGNLVDSTATLCPLISSWDRSLVFQKGGTGFAMRLLAPAGHPVIVSLLENLQRLECVLSILETLQRKKVEIRTFSLSSISFIYGSERDLAASLNIHLSRNESLMKLSPTDLASRREFLFGLRLGIQFGLQNPHRRIQESLASSLNRSPTEAGLETVVELLTLTLPLMRALDQLMANPSHSGPLRLHVTVRNAKTYQLHYPGDEARFQLVAASHQNRLVWVLKDANSQGNSKNDDSITARLRQTLYTSKGDGWKGLETGVVAEVDQVGNLLRELEKCFVASRADRADPKHKPTDYAANHTGLNNPEISALAIKKGTTDGAKLSLSDSLTTLPNDKGNLSQADTAAQKEDIIMID</sequence>
<comment type="function">
    <text evidence="1">Component of the Mediator complex, a coactivator involved in the regulated transcription of nearly all RNA polymerase II-dependent genes. Mediator functions as a bridge to convey information from gene-specific regulatory proteins to the basal RNA polymerase II transcription machinery. Mediator is recruited to promoters by direct interactions with regulatory proteins and serves as a scaffold for the assembly of a functional preinitiation complex with RNA polymerase II and the general transcription factors (By similarity).</text>
</comment>
<comment type="subunit">
    <text evidence="1">Component of the Mediator complex.</text>
</comment>
<comment type="subcellular location">
    <subcellularLocation>
        <location evidence="3">Nucleus</location>
    </subcellularLocation>
</comment>
<comment type="similarity">
    <text evidence="3">Belongs to the Mediator complex subunit 14 family.</text>
</comment>
<comment type="sequence caution" evidence="3">
    <conflict type="erroneous initiation">
        <sequence resource="EMBL-CDS" id="CAK48911"/>
    </conflict>
</comment>
<name>MED14_ASPNC</name>
<gene>
    <name type="primary">rgr1</name>
    <name type="synonym">med14</name>
    <name type="ORF">An02g14820</name>
</gene>